<reference key="1">
    <citation type="journal article" date="2004" name="Science">
        <title>The Ashbya gossypii genome as a tool for mapping the ancient Saccharomyces cerevisiae genome.</title>
        <authorList>
            <person name="Dietrich F.S."/>
            <person name="Voegeli S."/>
            <person name="Brachat S."/>
            <person name="Lerch A."/>
            <person name="Gates K."/>
            <person name="Steiner S."/>
            <person name="Mohr C."/>
            <person name="Poehlmann R."/>
            <person name="Luedi P."/>
            <person name="Choi S."/>
            <person name="Wing R.A."/>
            <person name="Flavier A."/>
            <person name="Gaffney T.D."/>
            <person name="Philippsen P."/>
        </authorList>
    </citation>
    <scope>NUCLEOTIDE SEQUENCE [LARGE SCALE GENOMIC DNA]</scope>
    <source>
        <strain>ATCC 10895 / CBS 109.51 / FGSC 9923 / NRRL Y-1056</strain>
    </source>
</reference>
<reference key="2">
    <citation type="journal article" date="2013" name="G3 (Bethesda)">
        <title>Genomes of Ashbya fungi isolated from insects reveal four mating-type loci, numerous translocations, lack of transposons, and distinct gene duplications.</title>
        <authorList>
            <person name="Dietrich F.S."/>
            <person name="Voegeli S."/>
            <person name="Kuo S."/>
            <person name="Philippsen P."/>
        </authorList>
    </citation>
    <scope>GENOME REANNOTATION</scope>
    <source>
        <strain>ATCC 10895 / CBS 109.51 / FGSC 9923 / NRRL Y-1056</strain>
    </source>
</reference>
<dbReference type="EC" id="2.7.1.-"/>
<dbReference type="EMBL" id="AE016819">
    <property type="protein sequence ID" value="AAS53560.1"/>
    <property type="molecule type" value="Genomic_DNA"/>
</dbReference>
<dbReference type="RefSeq" id="NP_985736.1">
    <property type="nucleotide sequence ID" value="NM_211090.1"/>
</dbReference>
<dbReference type="SMR" id="Q753Y3"/>
<dbReference type="FunCoup" id="Q753Y3">
    <property type="interactions" value="154"/>
</dbReference>
<dbReference type="STRING" id="284811.Q753Y3"/>
<dbReference type="EnsemblFungi" id="AAS53560">
    <property type="protein sequence ID" value="AAS53560"/>
    <property type="gene ID" value="AGOS_AFR189C"/>
</dbReference>
<dbReference type="GeneID" id="4621994"/>
<dbReference type="KEGG" id="ago:AGOS_AFR189C"/>
<dbReference type="eggNOG" id="KOG2750">
    <property type="taxonomic scope" value="Eukaryota"/>
</dbReference>
<dbReference type="HOGENOM" id="CLU_010345_1_1_1"/>
<dbReference type="InParanoid" id="Q753Y3"/>
<dbReference type="OMA" id="EHVWKVR"/>
<dbReference type="OrthoDB" id="4054781at2759"/>
<dbReference type="Proteomes" id="UP000000591">
    <property type="component" value="Chromosome VI"/>
</dbReference>
<dbReference type="GO" id="GO:0090730">
    <property type="term" value="C:Las1 complex"/>
    <property type="evidence" value="ECO:0007669"/>
    <property type="project" value="EnsemblFungi"/>
</dbReference>
<dbReference type="GO" id="GO:0030874">
    <property type="term" value="C:nucleolar chromatin"/>
    <property type="evidence" value="ECO:0007669"/>
    <property type="project" value="EnsemblFungi"/>
</dbReference>
<dbReference type="GO" id="GO:0005634">
    <property type="term" value="C:nucleus"/>
    <property type="evidence" value="ECO:0000318"/>
    <property type="project" value="GO_Central"/>
</dbReference>
<dbReference type="GO" id="GO:0005524">
    <property type="term" value="F:ATP binding"/>
    <property type="evidence" value="ECO:0007669"/>
    <property type="project" value="UniProtKB-KW"/>
</dbReference>
<dbReference type="GO" id="GO:0051731">
    <property type="term" value="F:polynucleotide 5'-hydroxyl-kinase activity"/>
    <property type="evidence" value="ECO:0000250"/>
    <property type="project" value="UniProtKB"/>
</dbReference>
<dbReference type="GO" id="GO:0000448">
    <property type="term" value="P:cleavage in ITS2 between 5.8S rRNA and LSU-rRNA of tricistronic rRNA transcript (SSU-rRNA, 5.8S rRNA, LSU-rRNA)"/>
    <property type="evidence" value="ECO:0000318"/>
    <property type="project" value="GO_Central"/>
</dbReference>
<dbReference type="GO" id="GO:0006364">
    <property type="term" value="P:rRNA processing"/>
    <property type="evidence" value="ECO:0000250"/>
    <property type="project" value="UniProtKB"/>
</dbReference>
<dbReference type="GO" id="GO:0006363">
    <property type="term" value="P:termination of RNA polymerase I transcription"/>
    <property type="evidence" value="ECO:0007669"/>
    <property type="project" value="EnsemblFungi"/>
</dbReference>
<dbReference type="FunFam" id="3.40.50.300:FF:002306">
    <property type="entry name" value="Grc3p"/>
    <property type="match status" value="1"/>
</dbReference>
<dbReference type="Gene3D" id="3.40.50.300">
    <property type="entry name" value="P-loop containing nucleotide triphosphate hydrolases"/>
    <property type="match status" value="1"/>
</dbReference>
<dbReference type="InterPro" id="IPR045116">
    <property type="entry name" value="Clp1/Grc3"/>
</dbReference>
<dbReference type="InterPro" id="IPR032319">
    <property type="entry name" value="CLP1_P"/>
</dbReference>
<dbReference type="InterPro" id="IPR027417">
    <property type="entry name" value="P-loop_NTPase"/>
</dbReference>
<dbReference type="PANTHER" id="PTHR12755">
    <property type="entry name" value="CLEAVAGE/POLYADENYLATION FACTOR IA SUBUNIT CLP1P"/>
    <property type="match status" value="1"/>
</dbReference>
<dbReference type="PANTHER" id="PTHR12755:SF3">
    <property type="entry name" value="POLYNUCLEOTIDE 5'-HYDROXYL-KINASE NOL9"/>
    <property type="match status" value="1"/>
</dbReference>
<dbReference type="Pfam" id="PF16575">
    <property type="entry name" value="CLP1_P"/>
    <property type="match status" value="1"/>
</dbReference>
<keyword id="KW-0067">ATP-binding</keyword>
<keyword id="KW-0418">Kinase</keyword>
<keyword id="KW-0547">Nucleotide-binding</keyword>
<keyword id="KW-0539">Nucleus</keyword>
<keyword id="KW-1185">Reference proteome</keyword>
<keyword id="KW-0698">rRNA processing</keyword>
<keyword id="KW-0808">Transferase</keyword>
<sequence length="633" mass="71137">MSDDFVVPTYEVGGSDSGSDQDISDIEEGSFNGISATPLPTADVEYVSEASPMDATASLGYLSGAEGANLYVAREGANYFNDAANKAVVLCLHSYEQLAISGVFKLQVMKGGITYNSIHYNCGLHTYDFWHPLSESIPPIAASFAADWEEHSYGLSPWLPADIKEEYECILRISEGSNIGDVGRLMAELGQLWTRHTGCTFSILRPEDYARPLILNKDWDNLQAELMIHHMNSEHDMRVMCIGGKNSGKSTLLRLLLQKFLHGNKSTTKATGVSHEADVVNYLDMDPGQPEYSAPDSISWSKLTSETLSLGQHLAQGHREMIQTTYIGSSTPQTWPEMYLTAMEHIIHKWEMEGQMNTALLNLPGWIKGFGITIINKAMELFKPTHIIFLTHGGKLISKELVVPNMFETMQKGKYKPMIYNLQAFTQHNIPGLPAQDPRYHAANIRSFRLLAHLHRLSEQSYYPGPLLSSPPLQVSFGSQGIMAFRFLQDPSSGYHQDDISAALQGCVVCLYHSKMPPDIDMCGVFPMLKHSADYTSMDFVTLALIHSIDVERKFMNIYIPGHVSGRVHSLKNNFVLVRGATDLPLCELYPQKLLSSSYRNREIPYVSFSKRKKYEYVWKIRKNVRRRGHYNK</sequence>
<proteinExistence type="inferred from homology"/>
<name>GRC3_EREGS</name>
<organism>
    <name type="scientific">Eremothecium gossypii (strain ATCC 10895 / CBS 109.51 / FGSC 9923 / NRRL Y-1056)</name>
    <name type="common">Yeast</name>
    <name type="synonym">Ashbya gossypii</name>
    <dbReference type="NCBI Taxonomy" id="284811"/>
    <lineage>
        <taxon>Eukaryota</taxon>
        <taxon>Fungi</taxon>
        <taxon>Dikarya</taxon>
        <taxon>Ascomycota</taxon>
        <taxon>Saccharomycotina</taxon>
        <taxon>Saccharomycetes</taxon>
        <taxon>Saccharomycetales</taxon>
        <taxon>Saccharomycetaceae</taxon>
        <taxon>Eremothecium</taxon>
    </lineage>
</organism>
<feature type="chain" id="PRO_0000087587" description="Polynucleotide 5'-hydroxyl-kinase GRC3">
    <location>
        <begin position="1"/>
        <end position="633"/>
    </location>
</feature>
<feature type="binding site" evidence="2">
    <location>
        <begin position="243"/>
        <end position="250"/>
    </location>
    <ligand>
        <name>ATP</name>
        <dbReference type="ChEBI" id="CHEBI:30616"/>
    </ligand>
</feature>
<protein>
    <recommendedName>
        <fullName>Polynucleotide 5'-hydroxyl-kinase GRC3</fullName>
        <ecNumber>2.7.1.-</ecNumber>
    </recommendedName>
</protein>
<evidence type="ECO:0000250" key="1"/>
<evidence type="ECO:0000255" key="2"/>
<evidence type="ECO:0000305" key="3"/>
<gene>
    <name type="primary">GRC3</name>
    <name type="ordered locus">AFR189C</name>
</gene>
<accession>Q753Y3</accession>
<comment type="function">
    <text evidence="1">Polynucleotide 5'-kinase involved in rRNA processing.</text>
</comment>
<comment type="subcellular location">
    <subcellularLocation>
        <location evidence="1">Nucleus</location>
        <location evidence="1">Nucleolus</location>
    </subcellularLocation>
</comment>
<comment type="similarity">
    <text evidence="3">Belongs to the Clp1 family. NOL9/GRC3 subfamily.</text>
</comment>